<proteinExistence type="evidence at protein level"/>
<reference key="1">
    <citation type="submission" date="2000-10" db="EMBL/GenBank/DDBJ databases">
        <title>Identification of novel membrane proteins.</title>
        <authorList>
            <person name="Zhang W."/>
            <person name="Li N."/>
            <person name="Wan T."/>
            <person name="Cao X."/>
        </authorList>
    </citation>
    <scope>NUCLEOTIDE SEQUENCE [MRNA] (ISOFORM 1)</scope>
</reference>
<reference key="2">
    <citation type="journal article" date="2001" name="Genome Res.">
        <title>Towards a catalog of human genes and proteins: sequencing and analysis of 500 novel complete protein coding human cDNAs.</title>
        <authorList>
            <person name="Wiemann S."/>
            <person name="Weil B."/>
            <person name="Wellenreuther R."/>
            <person name="Gassenhuber J."/>
            <person name="Glassl S."/>
            <person name="Ansorge W."/>
            <person name="Boecher M."/>
            <person name="Bloecker H."/>
            <person name="Bauersachs S."/>
            <person name="Blum H."/>
            <person name="Lauber J."/>
            <person name="Duesterhoeft A."/>
            <person name="Beyer A."/>
            <person name="Koehrer K."/>
            <person name="Strack N."/>
            <person name="Mewes H.-W."/>
            <person name="Ottenwaelder B."/>
            <person name="Obermaier B."/>
            <person name="Tampe J."/>
            <person name="Heubner D."/>
            <person name="Wambutt R."/>
            <person name="Korn B."/>
            <person name="Klein M."/>
            <person name="Poustka A."/>
        </authorList>
    </citation>
    <scope>NUCLEOTIDE SEQUENCE [LARGE SCALE MRNA] (ISOFORM 1)</scope>
    <source>
        <tissue>Brain</tissue>
    </source>
</reference>
<reference key="3">
    <citation type="journal article" date="2004" name="Nat. Genet.">
        <title>Complete sequencing and characterization of 21,243 full-length human cDNAs.</title>
        <authorList>
            <person name="Ota T."/>
            <person name="Suzuki Y."/>
            <person name="Nishikawa T."/>
            <person name="Otsuki T."/>
            <person name="Sugiyama T."/>
            <person name="Irie R."/>
            <person name="Wakamatsu A."/>
            <person name="Hayashi K."/>
            <person name="Sato H."/>
            <person name="Nagai K."/>
            <person name="Kimura K."/>
            <person name="Makita H."/>
            <person name="Sekine M."/>
            <person name="Obayashi M."/>
            <person name="Nishi T."/>
            <person name="Shibahara T."/>
            <person name="Tanaka T."/>
            <person name="Ishii S."/>
            <person name="Yamamoto J."/>
            <person name="Saito K."/>
            <person name="Kawai Y."/>
            <person name="Isono Y."/>
            <person name="Nakamura Y."/>
            <person name="Nagahari K."/>
            <person name="Murakami K."/>
            <person name="Yasuda T."/>
            <person name="Iwayanagi T."/>
            <person name="Wagatsuma M."/>
            <person name="Shiratori A."/>
            <person name="Sudo H."/>
            <person name="Hosoiri T."/>
            <person name="Kaku Y."/>
            <person name="Kodaira H."/>
            <person name="Kondo H."/>
            <person name="Sugawara M."/>
            <person name="Takahashi M."/>
            <person name="Kanda K."/>
            <person name="Yokoi T."/>
            <person name="Furuya T."/>
            <person name="Kikkawa E."/>
            <person name="Omura Y."/>
            <person name="Abe K."/>
            <person name="Kamihara K."/>
            <person name="Katsuta N."/>
            <person name="Sato K."/>
            <person name="Tanikawa M."/>
            <person name="Yamazaki M."/>
            <person name="Ninomiya K."/>
            <person name="Ishibashi T."/>
            <person name="Yamashita H."/>
            <person name="Murakawa K."/>
            <person name="Fujimori K."/>
            <person name="Tanai H."/>
            <person name="Kimata M."/>
            <person name="Watanabe M."/>
            <person name="Hiraoka S."/>
            <person name="Chiba Y."/>
            <person name="Ishida S."/>
            <person name="Ono Y."/>
            <person name="Takiguchi S."/>
            <person name="Watanabe S."/>
            <person name="Yosida M."/>
            <person name="Hotuta T."/>
            <person name="Kusano J."/>
            <person name="Kanehori K."/>
            <person name="Takahashi-Fujii A."/>
            <person name="Hara H."/>
            <person name="Tanase T.-O."/>
            <person name="Nomura Y."/>
            <person name="Togiya S."/>
            <person name="Komai F."/>
            <person name="Hara R."/>
            <person name="Takeuchi K."/>
            <person name="Arita M."/>
            <person name="Imose N."/>
            <person name="Musashino K."/>
            <person name="Yuuki H."/>
            <person name="Oshima A."/>
            <person name="Sasaki N."/>
            <person name="Aotsuka S."/>
            <person name="Yoshikawa Y."/>
            <person name="Matsunawa H."/>
            <person name="Ichihara T."/>
            <person name="Shiohata N."/>
            <person name="Sano S."/>
            <person name="Moriya S."/>
            <person name="Momiyama H."/>
            <person name="Satoh N."/>
            <person name="Takami S."/>
            <person name="Terashima Y."/>
            <person name="Suzuki O."/>
            <person name="Nakagawa S."/>
            <person name="Senoh A."/>
            <person name="Mizoguchi H."/>
            <person name="Goto Y."/>
            <person name="Shimizu F."/>
            <person name="Wakebe H."/>
            <person name="Hishigaki H."/>
            <person name="Watanabe T."/>
            <person name="Sugiyama A."/>
            <person name="Takemoto M."/>
            <person name="Kawakami B."/>
            <person name="Yamazaki M."/>
            <person name="Watanabe K."/>
            <person name="Kumagai A."/>
            <person name="Itakura S."/>
            <person name="Fukuzumi Y."/>
            <person name="Fujimori Y."/>
            <person name="Komiyama M."/>
            <person name="Tashiro H."/>
            <person name="Tanigami A."/>
            <person name="Fujiwara T."/>
            <person name="Ono T."/>
            <person name="Yamada K."/>
            <person name="Fujii Y."/>
            <person name="Ozaki K."/>
            <person name="Hirao M."/>
            <person name="Ohmori Y."/>
            <person name="Kawabata A."/>
            <person name="Hikiji T."/>
            <person name="Kobatake N."/>
            <person name="Inagaki H."/>
            <person name="Ikema Y."/>
            <person name="Okamoto S."/>
            <person name="Okitani R."/>
            <person name="Kawakami T."/>
            <person name="Noguchi S."/>
            <person name="Itoh T."/>
            <person name="Shigeta K."/>
            <person name="Senba T."/>
            <person name="Matsumura K."/>
            <person name="Nakajima Y."/>
            <person name="Mizuno T."/>
            <person name="Morinaga M."/>
            <person name="Sasaki M."/>
            <person name="Togashi T."/>
            <person name="Oyama M."/>
            <person name="Hata H."/>
            <person name="Watanabe M."/>
            <person name="Komatsu T."/>
            <person name="Mizushima-Sugano J."/>
            <person name="Satoh T."/>
            <person name="Shirai Y."/>
            <person name="Takahashi Y."/>
            <person name="Nakagawa K."/>
            <person name="Okumura K."/>
            <person name="Nagase T."/>
            <person name="Nomura N."/>
            <person name="Kikuchi H."/>
            <person name="Masuho Y."/>
            <person name="Yamashita R."/>
            <person name="Nakai K."/>
            <person name="Yada T."/>
            <person name="Nakamura Y."/>
            <person name="Ohara O."/>
            <person name="Isogai T."/>
            <person name="Sugano S."/>
        </authorList>
    </citation>
    <scope>NUCLEOTIDE SEQUENCE [LARGE SCALE MRNA] (ISOFORM 3)</scope>
    <source>
        <tissue>Caudate nucleus</tissue>
    </source>
</reference>
<reference key="4">
    <citation type="journal article" date="2004" name="Nature">
        <title>The DNA sequence and comparative analysis of human chromosome 10.</title>
        <authorList>
            <person name="Deloukas P."/>
            <person name="Earthrowl M.E."/>
            <person name="Grafham D.V."/>
            <person name="Rubenfield M."/>
            <person name="French L."/>
            <person name="Steward C.A."/>
            <person name="Sims S.K."/>
            <person name="Jones M.C."/>
            <person name="Searle S."/>
            <person name="Scott C."/>
            <person name="Howe K."/>
            <person name="Hunt S.E."/>
            <person name="Andrews T.D."/>
            <person name="Gilbert J.G.R."/>
            <person name="Swarbreck D."/>
            <person name="Ashurst J.L."/>
            <person name="Taylor A."/>
            <person name="Battles J."/>
            <person name="Bird C.P."/>
            <person name="Ainscough R."/>
            <person name="Almeida J.P."/>
            <person name="Ashwell R.I.S."/>
            <person name="Ambrose K.D."/>
            <person name="Babbage A.K."/>
            <person name="Bagguley C.L."/>
            <person name="Bailey J."/>
            <person name="Banerjee R."/>
            <person name="Bates K."/>
            <person name="Beasley H."/>
            <person name="Bray-Allen S."/>
            <person name="Brown A.J."/>
            <person name="Brown J.Y."/>
            <person name="Burford D.C."/>
            <person name="Burrill W."/>
            <person name="Burton J."/>
            <person name="Cahill P."/>
            <person name="Camire D."/>
            <person name="Carter N.P."/>
            <person name="Chapman J.C."/>
            <person name="Clark S.Y."/>
            <person name="Clarke G."/>
            <person name="Clee C.M."/>
            <person name="Clegg S."/>
            <person name="Corby N."/>
            <person name="Coulson A."/>
            <person name="Dhami P."/>
            <person name="Dutta I."/>
            <person name="Dunn M."/>
            <person name="Faulkner L."/>
            <person name="Frankish A."/>
            <person name="Frankland J.A."/>
            <person name="Garner P."/>
            <person name="Garnett J."/>
            <person name="Gribble S."/>
            <person name="Griffiths C."/>
            <person name="Grocock R."/>
            <person name="Gustafson E."/>
            <person name="Hammond S."/>
            <person name="Harley J.L."/>
            <person name="Hart E."/>
            <person name="Heath P.D."/>
            <person name="Ho T.P."/>
            <person name="Hopkins B."/>
            <person name="Horne J."/>
            <person name="Howden P.J."/>
            <person name="Huckle E."/>
            <person name="Hynds C."/>
            <person name="Johnson C."/>
            <person name="Johnson D."/>
            <person name="Kana A."/>
            <person name="Kay M."/>
            <person name="Kimberley A.M."/>
            <person name="Kershaw J.K."/>
            <person name="Kokkinaki M."/>
            <person name="Laird G.K."/>
            <person name="Lawlor S."/>
            <person name="Lee H.M."/>
            <person name="Leongamornlert D.A."/>
            <person name="Laird G."/>
            <person name="Lloyd C."/>
            <person name="Lloyd D.M."/>
            <person name="Loveland J."/>
            <person name="Lovell J."/>
            <person name="McLaren S."/>
            <person name="McLay K.E."/>
            <person name="McMurray A."/>
            <person name="Mashreghi-Mohammadi M."/>
            <person name="Matthews L."/>
            <person name="Milne S."/>
            <person name="Nickerson T."/>
            <person name="Nguyen M."/>
            <person name="Overton-Larty E."/>
            <person name="Palmer S.A."/>
            <person name="Pearce A.V."/>
            <person name="Peck A.I."/>
            <person name="Pelan S."/>
            <person name="Phillimore B."/>
            <person name="Porter K."/>
            <person name="Rice C.M."/>
            <person name="Rogosin A."/>
            <person name="Ross M.T."/>
            <person name="Sarafidou T."/>
            <person name="Sehra H.K."/>
            <person name="Shownkeen R."/>
            <person name="Skuce C.D."/>
            <person name="Smith M."/>
            <person name="Standring L."/>
            <person name="Sycamore N."/>
            <person name="Tester J."/>
            <person name="Thorpe A."/>
            <person name="Torcasso W."/>
            <person name="Tracey A."/>
            <person name="Tromans A."/>
            <person name="Tsolas J."/>
            <person name="Wall M."/>
            <person name="Walsh J."/>
            <person name="Wang H."/>
            <person name="Weinstock K."/>
            <person name="West A.P."/>
            <person name="Willey D.L."/>
            <person name="Whitehead S.L."/>
            <person name="Wilming L."/>
            <person name="Wray P.W."/>
            <person name="Young L."/>
            <person name="Chen Y."/>
            <person name="Lovering R.C."/>
            <person name="Moschonas N.K."/>
            <person name="Siebert R."/>
            <person name="Fechtel K."/>
            <person name="Bentley D."/>
            <person name="Durbin R.M."/>
            <person name="Hubbard T."/>
            <person name="Doucette-Stamm L."/>
            <person name="Beck S."/>
            <person name="Smith D.R."/>
            <person name="Rogers J."/>
        </authorList>
    </citation>
    <scope>NUCLEOTIDE SEQUENCE [LARGE SCALE GENOMIC DNA]</scope>
</reference>
<reference key="5">
    <citation type="submission" date="2005-09" db="EMBL/GenBank/DDBJ databases">
        <authorList>
            <person name="Mural R.J."/>
            <person name="Istrail S."/>
            <person name="Sutton G.G."/>
            <person name="Florea L."/>
            <person name="Halpern A.L."/>
            <person name="Mobarry C.M."/>
            <person name="Lippert R."/>
            <person name="Walenz B."/>
            <person name="Shatkay H."/>
            <person name="Dew I."/>
            <person name="Miller J.R."/>
            <person name="Flanigan M.J."/>
            <person name="Edwards N.J."/>
            <person name="Bolanos R."/>
            <person name="Fasulo D."/>
            <person name="Halldorsson B.V."/>
            <person name="Hannenhalli S."/>
            <person name="Turner R."/>
            <person name="Yooseph S."/>
            <person name="Lu F."/>
            <person name="Nusskern D.R."/>
            <person name="Shue B.C."/>
            <person name="Zheng X.H."/>
            <person name="Zhong F."/>
            <person name="Delcher A.L."/>
            <person name="Huson D.H."/>
            <person name="Kravitz S.A."/>
            <person name="Mouchard L."/>
            <person name="Reinert K."/>
            <person name="Remington K.A."/>
            <person name="Clark A.G."/>
            <person name="Waterman M.S."/>
            <person name="Eichler E.E."/>
            <person name="Adams M.D."/>
            <person name="Hunkapiller M.W."/>
            <person name="Myers E.W."/>
            <person name="Venter J.C."/>
        </authorList>
    </citation>
    <scope>NUCLEOTIDE SEQUENCE [LARGE SCALE GENOMIC DNA]</scope>
</reference>
<reference key="6">
    <citation type="journal article" date="2004" name="Genome Res.">
        <title>The status, quality, and expansion of the NIH full-length cDNA project: the Mammalian Gene Collection (MGC).</title>
        <authorList>
            <consortium name="The MGC Project Team"/>
        </authorList>
    </citation>
    <scope>NUCLEOTIDE SEQUENCE [LARGE SCALE MRNA] (ISOFORMS 1 AND 2)</scope>
    <source>
        <tissue>Placenta</tissue>
        <tissue>Skin</tissue>
    </source>
</reference>
<reference key="7">
    <citation type="journal article" date="2011" name="BMC Syst. Biol.">
        <title>Initial characterization of the human central proteome.</title>
        <authorList>
            <person name="Burkard T.R."/>
            <person name="Planyavsky M."/>
            <person name="Kaupe I."/>
            <person name="Breitwieser F.P."/>
            <person name="Buerckstuemmer T."/>
            <person name="Bennett K.L."/>
            <person name="Superti-Furga G."/>
            <person name="Colinge J."/>
        </authorList>
    </citation>
    <scope>IDENTIFICATION BY MASS SPECTROMETRY [LARGE SCALE ANALYSIS]</scope>
</reference>
<reference key="8">
    <citation type="journal article" date="2012" name="J. Biol. Chem.">
        <title>The TspanC8 subgroup of tetraspanins interacts with A disintegrin and metalloprotease 10 (ADAM10) and regulates its maturation and cell surface expression.</title>
        <authorList>
            <person name="Haining E.J."/>
            <person name="Yang J."/>
            <person name="Bailey R.L."/>
            <person name="Khan K."/>
            <person name="Collier R."/>
            <person name="Tsai S."/>
            <person name="Watson S.P."/>
            <person name="Frampton J."/>
            <person name="Garcia P."/>
            <person name="Tomlinson M.G."/>
        </authorList>
    </citation>
    <scope>FUNCTION</scope>
    <scope>INTERACTION WITH ADAM10</scope>
</reference>
<reference key="9">
    <citation type="journal article" date="2016" name="Cell. Mol. Life Sci.">
        <title>TspanC8 tetraspanins differentially regulate the cleavage of ADAM10 substrates, Notch activation and ADAM10 membrane compartmentalization.</title>
        <authorList>
            <person name="Jouannet S."/>
            <person name="Saint-Pol J."/>
            <person name="Fernandez L."/>
            <person name="Nguyen V."/>
            <person name="Charrin S."/>
            <person name="Boucheix C."/>
            <person name="Brou C."/>
            <person name="Milhiet P.E."/>
            <person name="Rubinstein E."/>
        </authorList>
    </citation>
    <scope>FUNCTION</scope>
    <scope>INTERACTION WITH ADAM10</scope>
    <scope>SUBCELLULAR LOCATION</scope>
</reference>
<reference key="10">
    <citation type="journal article" date="2016" name="J. Biol. Chem.">
        <title>TspanC8 tetraspanins and A disintegrin and metalloprotease 10 (ADAM10) interact via their extracellular regions: evidence for distinct binding mechanisms for different TspanC8 proteins.</title>
        <authorList>
            <person name="Noy P.J."/>
            <person name="Yang J."/>
            <person name="Reyat J.S."/>
            <person name="Matthews A.L."/>
            <person name="Charlton A.E."/>
            <person name="Furmston J."/>
            <person name="Rogers D.A."/>
            <person name="Rainger G.E."/>
            <person name="Tomlinson M.G."/>
        </authorList>
    </citation>
    <scope>FUNCTION</scope>
    <scope>INTERACTION WITH ADAM10</scope>
</reference>
<reference key="11">
    <citation type="journal article" date="2023" name="Cell">
        <title>Structural basis for membrane-proximal proteolysis of substrates by ADAM10.</title>
        <authorList>
            <person name="Lipper C.H."/>
            <person name="Egan E.D."/>
            <person name="Gabriel K.H."/>
            <person name="Blacklow S.C."/>
        </authorList>
    </citation>
    <scope>FUNCTION</scope>
</reference>
<gene>
    <name evidence="11" type="primary">TSPAN14</name>
    <name type="synonym">TM4SF14</name>
</gene>
<dbReference type="EMBL" id="AF311903">
    <property type="protein sequence ID" value="AAM94899.1"/>
    <property type="molecule type" value="mRNA"/>
</dbReference>
<dbReference type="EMBL" id="AL136638">
    <property type="protein sequence ID" value="CAB66573.1"/>
    <property type="molecule type" value="mRNA"/>
</dbReference>
<dbReference type="EMBL" id="AK295321">
    <property type="protein sequence ID" value="BAG58298.1"/>
    <property type="molecule type" value="mRNA"/>
</dbReference>
<dbReference type="EMBL" id="AC021028">
    <property type="status" value="NOT_ANNOTATED_CDS"/>
    <property type="molecule type" value="Genomic_DNA"/>
</dbReference>
<dbReference type="EMBL" id="CH471142">
    <property type="protein sequence ID" value="EAW80384.1"/>
    <property type="molecule type" value="Genomic_DNA"/>
</dbReference>
<dbReference type="EMBL" id="CH471142">
    <property type="protein sequence ID" value="EAW80385.1"/>
    <property type="molecule type" value="Genomic_DNA"/>
</dbReference>
<dbReference type="EMBL" id="CH471142">
    <property type="protein sequence ID" value="EAW80386.1"/>
    <property type="molecule type" value="Genomic_DNA"/>
</dbReference>
<dbReference type="EMBL" id="CH471142">
    <property type="protein sequence ID" value="EAW80388.1"/>
    <property type="molecule type" value="Genomic_DNA"/>
</dbReference>
<dbReference type="EMBL" id="CH471142">
    <property type="protein sequence ID" value="EAW80389.1"/>
    <property type="molecule type" value="Genomic_DNA"/>
</dbReference>
<dbReference type="EMBL" id="BC002920">
    <property type="protein sequence ID" value="AAH02920.1"/>
    <property type="molecule type" value="mRNA"/>
</dbReference>
<dbReference type="EMBL" id="BC093016">
    <property type="protein sequence ID" value="AAH93016.1"/>
    <property type="molecule type" value="mRNA"/>
</dbReference>
<dbReference type="CCDS" id="CCDS44448.1">
    <molecule id="Q8NG11-3"/>
</dbReference>
<dbReference type="CCDS" id="CCDS7369.1">
    <molecule id="Q8NG11-1"/>
</dbReference>
<dbReference type="RefSeq" id="NP_001121781.1">
    <molecule id="Q8NG11-3"/>
    <property type="nucleotide sequence ID" value="NM_001128309.3"/>
</dbReference>
<dbReference type="RefSeq" id="NP_001338195.1">
    <molecule id="Q8NG11-1"/>
    <property type="nucleotide sequence ID" value="NM_001351266.2"/>
</dbReference>
<dbReference type="RefSeq" id="NP_001338196.1">
    <molecule id="Q8NG11-1"/>
    <property type="nucleotide sequence ID" value="NM_001351267.4"/>
</dbReference>
<dbReference type="RefSeq" id="NP_001338197.1">
    <molecule id="Q8NG11-1"/>
    <property type="nucleotide sequence ID" value="NM_001351268.2"/>
</dbReference>
<dbReference type="RefSeq" id="NP_001338198.1">
    <molecule id="Q8NG11-1"/>
    <property type="nucleotide sequence ID" value="NM_001351269.2"/>
</dbReference>
<dbReference type="RefSeq" id="NP_001338199.1">
    <molecule id="Q8NG11-1"/>
    <property type="nucleotide sequence ID" value="NM_001351270.2"/>
</dbReference>
<dbReference type="RefSeq" id="NP_001338200.1">
    <molecule id="Q8NG11-1"/>
    <property type="nucleotide sequence ID" value="NM_001351271.2"/>
</dbReference>
<dbReference type="RefSeq" id="NP_001338201.1">
    <molecule id="Q8NG11-1"/>
    <property type="nucleotide sequence ID" value="NM_001351272.2"/>
</dbReference>
<dbReference type="RefSeq" id="NP_112189.2">
    <molecule id="Q8NG11-1"/>
    <property type="nucleotide sequence ID" value="NM_030927.4"/>
</dbReference>
<dbReference type="RefSeq" id="XP_006718055.1">
    <property type="nucleotide sequence ID" value="XM_006717992.3"/>
</dbReference>
<dbReference type="RefSeq" id="XP_011538524.1">
    <property type="nucleotide sequence ID" value="XM_011540222.2"/>
</dbReference>
<dbReference type="RefSeq" id="XP_016872196.1">
    <property type="nucleotide sequence ID" value="XM_017016707.1"/>
</dbReference>
<dbReference type="RefSeq" id="XP_016872197.1">
    <property type="nucleotide sequence ID" value="XM_017016708.1"/>
</dbReference>
<dbReference type="RefSeq" id="XP_016872198.1">
    <property type="nucleotide sequence ID" value="XM_017016709.1"/>
</dbReference>
<dbReference type="RefSeq" id="XP_016872199.1">
    <property type="nucleotide sequence ID" value="XM_017016710.1"/>
</dbReference>
<dbReference type="RefSeq" id="XP_016872200.1">
    <property type="nucleotide sequence ID" value="XM_017016711.1"/>
</dbReference>
<dbReference type="SMR" id="Q8NG11"/>
<dbReference type="BioGRID" id="123554">
    <property type="interactions" value="14"/>
</dbReference>
<dbReference type="FunCoup" id="Q8NG11">
    <property type="interactions" value="759"/>
</dbReference>
<dbReference type="IntAct" id="Q8NG11">
    <property type="interactions" value="17"/>
</dbReference>
<dbReference type="MINT" id="Q8NG11"/>
<dbReference type="STRING" id="9606.ENSP00000361231"/>
<dbReference type="TCDB" id="8.A.40.1.21">
    <property type="family name" value="the tetraspanin (tetraspanin) family"/>
</dbReference>
<dbReference type="GlyCosmos" id="Q8NG11">
    <property type="glycosylation" value="1 site, No reported glycans"/>
</dbReference>
<dbReference type="GlyGen" id="Q8NG11">
    <property type="glycosylation" value="1 site"/>
</dbReference>
<dbReference type="iPTMnet" id="Q8NG11"/>
<dbReference type="PhosphoSitePlus" id="Q8NG11"/>
<dbReference type="SwissPalm" id="Q8NG11"/>
<dbReference type="BioMuta" id="TSPAN14"/>
<dbReference type="DMDM" id="55976537"/>
<dbReference type="CPTAC" id="CPTAC-1188"/>
<dbReference type="jPOST" id="Q8NG11"/>
<dbReference type="MassIVE" id="Q8NG11"/>
<dbReference type="PaxDb" id="9606-ENSP00000396270"/>
<dbReference type="PeptideAtlas" id="Q8NG11"/>
<dbReference type="ProteomicsDB" id="73407">
    <molecule id="Q8NG11-1"/>
</dbReference>
<dbReference type="ProteomicsDB" id="73408">
    <molecule id="Q8NG11-2"/>
</dbReference>
<dbReference type="ProteomicsDB" id="73409">
    <molecule id="Q8NG11-3"/>
</dbReference>
<dbReference type="Pumba" id="Q8NG11"/>
<dbReference type="Antibodypedia" id="3113">
    <property type="antibodies" value="55 antibodies from 20 providers"/>
</dbReference>
<dbReference type="DNASU" id="81619"/>
<dbReference type="Ensembl" id="ENST00000372156.5">
    <molecule id="Q8NG11-1"/>
    <property type="protein sequence ID" value="ENSP00000361229.1"/>
    <property type="gene ID" value="ENSG00000108219.17"/>
</dbReference>
<dbReference type="Ensembl" id="ENST00000372158.6">
    <molecule id="Q8NG11-1"/>
    <property type="protein sequence ID" value="ENSP00000361231.1"/>
    <property type="gene ID" value="ENSG00000108219.17"/>
</dbReference>
<dbReference type="Ensembl" id="ENST00000372164.7">
    <molecule id="Q8NG11-2"/>
    <property type="protein sequence ID" value="ENSP00000361237.3"/>
    <property type="gene ID" value="ENSG00000108219.17"/>
</dbReference>
<dbReference type="Ensembl" id="ENST00000429989.8">
    <molecule id="Q8NG11-1"/>
    <property type="protein sequence ID" value="ENSP00000396270.2"/>
    <property type="gene ID" value="ENSG00000108219.17"/>
</dbReference>
<dbReference type="Ensembl" id="ENST00000481124.5">
    <molecule id="Q8NG11-3"/>
    <property type="protein sequence ID" value="ENSP00000418195.1"/>
    <property type="gene ID" value="ENSG00000108219.17"/>
</dbReference>
<dbReference type="Ensembl" id="ENST00000714437.1">
    <molecule id="Q8NG11-1"/>
    <property type="protein sequence ID" value="ENSP00000519706.1"/>
    <property type="gene ID" value="ENSG00000108219.17"/>
</dbReference>
<dbReference type="Ensembl" id="ENST00000714440.1">
    <molecule id="Q8NG11-1"/>
    <property type="protein sequence ID" value="ENSP00000519709.1"/>
    <property type="gene ID" value="ENSG00000108219.17"/>
</dbReference>
<dbReference type="Ensembl" id="ENST00000714441.1">
    <molecule id="Q8NG11-1"/>
    <property type="protein sequence ID" value="ENSP00000519710.1"/>
    <property type="gene ID" value="ENSG00000108219.17"/>
</dbReference>
<dbReference type="Ensembl" id="ENST00000714442.1">
    <molecule id="Q8NG11-1"/>
    <property type="protein sequence ID" value="ENSP00000519711.1"/>
    <property type="gene ID" value="ENSG00000108219.17"/>
</dbReference>
<dbReference type="Ensembl" id="ENST00000714443.1">
    <molecule id="Q8NG11-1"/>
    <property type="protein sequence ID" value="ENSP00000519712.1"/>
    <property type="gene ID" value="ENSG00000108219.17"/>
</dbReference>
<dbReference type="Ensembl" id="ENST00000714444.1">
    <molecule id="Q8NG11-1"/>
    <property type="protein sequence ID" value="ENSP00000519713.1"/>
    <property type="gene ID" value="ENSG00000108219.17"/>
</dbReference>
<dbReference type="Ensembl" id="ENST00000714445.1">
    <molecule id="Q8NG11-1"/>
    <property type="protein sequence ID" value="ENSP00000519714.1"/>
    <property type="gene ID" value="ENSG00000108219.17"/>
</dbReference>
<dbReference type="GeneID" id="81619"/>
<dbReference type="KEGG" id="hsa:81619"/>
<dbReference type="MANE-Select" id="ENST00000429989.8">
    <property type="protein sequence ID" value="ENSP00000396270.2"/>
    <property type="RefSeq nucleotide sequence ID" value="NM_030927.4"/>
    <property type="RefSeq protein sequence ID" value="NP_112189.2"/>
</dbReference>
<dbReference type="UCSC" id="uc001kci.5">
    <molecule id="Q8NG11-1"/>
    <property type="organism name" value="human"/>
</dbReference>
<dbReference type="AGR" id="HGNC:23303"/>
<dbReference type="CTD" id="81619"/>
<dbReference type="DisGeNET" id="81619"/>
<dbReference type="GeneCards" id="TSPAN14"/>
<dbReference type="HGNC" id="HGNC:23303">
    <property type="gene designation" value="TSPAN14"/>
</dbReference>
<dbReference type="HPA" id="ENSG00000108219">
    <property type="expression patterns" value="Low tissue specificity"/>
</dbReference>
<dbReference type="neXtProt" id="NX_Q8NG11"/>
<dbReference type="NIAGADS" id="ENSG00000108219"/>
<dbReference type="OpenTargets" id="ENSG00000108219"/>
<dbReference type="PharmGKB" id="PA128394731"/>
<dbReference type="VEuPathDB" id="HostDB:ENSG00000108219"/>
<dbReference type="eggNOG" id="KOG3882">
    <property type="taxonomic scope" value="Eukaryota"/>
</dbReference>
<dbReference type="GeneTree" id="ENSGT00940000159235"/>
<dbReference type="InParanoid" id="Q8NG11"/>
<dbReference type="OMA" id="QRMNHCC"/>
<dbReference type="OrthoDB" id="2014092at2759"/>
<dbReference type="PAN-GO" id="Q8NG11">
    <property type="GO annotations" value="1 GO annotation based on evolutionary models"/>
</dbReference>
<dbReference type="PhylomeDB" id="Q8NG11"/>
<dbReference type="TreeFam" id="TF313002"/>
<dbReference type="PathwayCommons" id="Q8NG11"/>
<dbReference type="Reactome" id="R-HSA-6798695">
    <property type="pathway name" value="Neutrophil degranulation"/>
</dbReference>
<dbReference type="Reactome" id="R-HSA-977225">
    <property type="pathway name" value="Amyloid fiber formation"/>
</dbReference>
<dbReference type="SignaLink" id="Q8NG11"/>
<dbReference type="BioGRID-ORCS" id="81619">
    <property type="hits" value="16 hits in 1163 CRISPR screens"/>
</dbReference>
<dbReference type="ChiTaRS" id="TSPAN14">
    <property type="organism name" value="human"/>
</dbReference>
<dbReference type="GenomeRNAi" id="81619"/>
<dbReference type="Pharos" id="Q8NG11">
    <property type="development level" value="Tbio"/>
</dbReference>
<dbReference type="PRO" id="PR:Q8NG11"/>
<dbReference type="Proteomes" id="UP000005640">
    <property type="component" value="Chromosome 10"/>
</dbReference>
<dbReference type="RNAct" id="Q8NG11">
    <property type="molecule type" value="protein"/>
</dbReference>
<dbReference type="Bgee" id="ENSG00000108219">
    <property type="expression patterns" value="Expressed in cortical plate and 188 other cell types or tissues"/>
</dbReference>
<dbReference type="ExpressionAtlas" id="Q8NG11">
    <property type="expression patterns" value="baseline and differential"/>
</dbReference>
<dbReference type="GO" id="GO:0009986">
    <property type="term" value="C:cell surface"/>
    <property type="evidence" value="ECO:0007669"/>
    <property type="project" value="Ensembl"/>
</dbReference>
<dbReference type="GO" id="GO:0005788">
    <property type="term" value="C:endoplasmic reticulum lumen"/>
    <property type="evidence" value="ECO:0000304"/>
    <property type="project" value="Reactome"/>
</dbReference>
<dbReference type="GO" id="GO:0005886">
    <property type="term" value="C:plasma membrane"/>
    <property type="evidence" value="ECO:0000314"/>
    <property type="project" value="UniProtKB"/>
</dbReference>
<dbReference type="GO" id="GO:0035579">
    <property type="term" value="C:specific granule membrane"/>
    <property type="evidence" value="ECO:0000304"/>
    <property type="project" value="Reactome"/>
</dbReference>
<dbReference type="GO" id="GO:0070821">
    <property type="term" value="C:tertiary granule membrane"/>
    <property type="evidence" value="ECO:0000304"/>
    <property type="project" value="Reactome"/>
</dbReference>
<dbReference type="GO" id="GO:0097197">
    <property type="term" value="C:tetraspanin-enriched microdomain"/>
    <property type="evidence" value="ECO:0007669"/>
    <property type="project" value="Ensembl"/>
</dbReference>
<dbReference type="GO" id="GO:0019899">
    <property type="term" value="F:enzyme binding"/>
    <property type="evidence" value="ECO:0000353"/>
    <property type="project" value="UniProtKB"/>
</dbReference>
<dbReference type="GO" id="GO:0045747">
    <property type="term" value="P:positive regulation of Notch signaling pathway"/>
    <property type="evidence" value="ECO:0000315"/>
    <property type="project" value="UniProtKB"/>
</dbReference>
<dbReference type="GO" id="GO:0072659">
    <property type="term" value="P:protein localization to plasma membrane"/>
    <property type="evidence" value="ECO:0000315"/>
    <property type="project" value="UniProtKB"/>
</dbReference>
<dbReference type="GO" id="GO:0051604">
    <property type="term" value="P:protein maturation"/>
    <property type="evidence" value="ECO:0000315"/>
    <property type="project" value="UniProtKB"/>
</dbReference>
<dbReference type="CDD" id="cd03159">
    <property type="entry name" value="TM4SF9_like_LEL"/>
    <property type="match status" value="1"/>
</dbReference>
<dbReference type="FunFam" id="1.10.1450.10:FF:000001">
    <property type="entry name" value="Tetraspanin"/>
    <property type="match status" value="1"/>
</dbReference>
<dbReference type="Gene3D" id="1.10.1450.10">
    <property type="entry name" value="Tetraspanin"/>
    <property type="match status" value="1"/>
</dbReference>
<dbReference type="InterPro" id="IPR018499">
    <property type="entry name" value="Tetraspanin/Peripherin"/>
</dbReference>
<dbReference type="InterPro" id="IPR000301">
    <property type="entry name" value="Tetraspanin_animals"/>
</dbReference>
<dbReference type="InterPro" id="IPR018503">
    <property type="entry name" value="Tetraspanin_CS"/>
</dbReference>
<dbReference type="InterPro" id="IPR008952">
    <property type="entry name" value="Tetraspanin_EC2_sf"/>
</dbReference>
<dbReference type="PANTHER" id="PTHR19282">
    <property type="entry name" value="TETRASPANIN"/>
    <property type="match status" value="1"/>
</dbReference>
<dbReference type="PANTHER" id="PTHR19282:SF261">
    <property type="entry name" value="TETRASPANIN-14"/>
    <property type="match status" value="1"/>
</dbReference>
<dbReference type="Pfam" id="PF00335">
    <property type="entry name" value="Tetraspanin"/>
    <property type="match status" value="1"/>
</dbReference>
<dbReference type="PIRSF" id="PIRSF002419">
    <property type="entry name" value="Tetraspanin"/>
    <property type="match status" value="1"/>
</dbReference>
<dbReference type="PRINTS" id="PR00259">
    <property type="entry name" value="TMFOUR"/>
</dbReference>
<dbReference type="SUPFAM" id="SSF48652">
    <property type="entry name" value="Tetraspanin"/>
    <property type="match status" value="1"/>
</dbReference>
<dbReference type="PROSITE" id="PS00421">
    <property type="entry name" value="TM4_1"/>
    <property type="match status" value="1"/>
</dbReference>
<feature type="chain" id="PRO_0000219261" description="Tetraspanin-14">
    <location>
        <begin position="1"/>
        <end position="270"/>
    </location>
</feature>
<feature type="topological domain" description="Cytoplasmic" evidence="10">
    <location>
        <begin position="1"/>
        <end position="17"/>
    </location>
</feature>
<feature type="transmembrane region" description="Helical" evidence="3">
    <location>
        <begin position="18"/>
        <end position="38"/>
    </location>
</feature>
<feature type="topological domain" description="Extracellular" evidence="10">
    <location>
        <begin position="39"/>
        <end position="61"/>
    </location>
</feature>
<feature type="transmembrane region" description="Helical" evidence="3">
    <location>
        <begin position="62"/>
        <end position="82"/>
    </location>
</feature>
<feature type="topological domain" description="Cytoplasmic" evidence="10">
    <location>
        <begin position="83"/>
        <end position="92"/>
    </location>
</feature>
<feature type="transmembrane region" description="Helical" evidence="3">
    <location>
        <begin position="93"/>
        <end position="113"/>
    </location>
</feature>
<feature type="topological domain" description="Extracellular" evidence="10">
    <location>
        <begin position="114"/>
        <end position="232"/>
    </location>
</feature>
<feature type="transmembrane region" description="Helical" evidence="3">
    <location>
        <begin position="233"/>
        <end position="253"/>
    </location>
</feature>
<feature type="topological domain" description="Cytoplasmic" evidence="10">
    <location>
        <begin position="254"/>
        <end position="270"/>
    </location>
</feature>
<feature type="region of interest" description="Necessary and sufficient for interaction with ADAM10" evidence="5">
    <location>
        <begin position="114"/>
        <end position="232"/>
    </location>
</feature>
<feature type="glycosylation site" description="N-linked (GlcNAc...) asparagine" evidence="3">
    <location>
        <position position="169"/>
    </location>
</feature>
<feature type="disulfide bond" evidence="1">
    <location>
        <begin position="153"/>
        <end position="221"/>
    </location>
</feature>
<feature type="disulfide bond" evidence="1">
    <location>
        <begin position="154"/>
        <end position="186"/>
    </location>
</feature>
<feature type="disulfide bond" evidence="1">
    <location>
        <begin position="170"/>
        <end position="180"/>
    </location>
</feature>
<feature type="disulfide bond" evidence="1">
    <location>
        <begin position="187"/>
        <end position="200"/>
    </location>
</feature>
<feature type="splice variant" id="VSP_043194" description="In isoform 3." evidence="8">
    <location>
        <begin position="28"/>
        <end position="150"/>
    </location>
</feature>
<feature type="splice variant" id="VSP_011878" description="In isoform 2." evidence="9">
    <location>
        <begin position="28"/>
        <end position="44"/>
    </location>
</feature>
<feature type="sequence conflict" description="In Ref. 2; CAB66573." evidence="10" ref="2">
    <original>L</original>
    <variation>V</variation>
    <location>
        <position position="143"/>
    </location>
</feature>
<feature type="sequence conflict" description="In Ref. 2; CAB66573." evidence="10" ref="2">
    <original>H</original>
    <variation>R</variation>
    <location>
        <position position="268"/>
    </location>
</feature>
<evidence type="ECO:0000250" key="1">
    <source>
        <dbReference type="UniProtKB" id="O95858"/>
    </source>
</evidence>
<evidence type="ECO:0000250" key="2">
    <source>
        <dbReference type="UniProtKB" id="Q8QZY6"/>
    </source>
</evidence>
<evidence type="ECO:0000255" key="3"/>
<evidence type="ECO:0000269" key="4">
    <source>
    </source>
</evidence>
<evidence type="ECO:0000269" key="5">
    <source>
    </source>
</evidence>
<evidence type="ECO:0000269" key="6">
    <source>
    </source>
</evidence>
<evidence type="ECO:0000269" key="7">
    <source>
    </source>
</evidence>
<evidence type="ECO:0000303" key="8">
    <source>
    </source>
</evidence>
<evidence type="ECO:0000303" key="9">
    <source>
    </source>
</evidence>
<evidence type="ECO:0000305" key="10"/>
<evidence type="ECO:0000312" key="11">
    <source>
        <dbReference type="HGNC" id="HGNC:23303"/>
    </source>
</evidence>
<name>TSN14_HUMAN</name>
<organism>
    <name type="scientific">Homo sapiens</name>
    <name type="common">Human</name>
    <dbReference type="NCBI Taxonomy" id="9606"/>
    <lineage>
        <taxon>Eukaryota</taxon>
        <taxon>Metazoa</taxon>
        <taxon>Chordata</taxon>
        <taxon>Craniata</taxon>
        <taxon>Vertebrata</taxon>
        <taxon>Euteleostomi</taxon>
        <taxon>Mammalia</taxon>
        <taxon>Eutheria</taxon>
        <taxon>Euarchontoglires</taxon>
        <taxon>Primates</taxon>
        <taxon>Haplorrhini</taxon>
        <taxon>Catarrhini</taxon>
        <taxon>Hominidae</taxon>
        <taxon>Homo</taxon>
    </lineage>
</organism>
<accession>Q8NG11</accession>
<accession>A6NHE1</accession>
<accession>B4DHY6</accession>
<accession>D3DWD7</accession>
<accession>D3DWD8</accession>
<accession>Q567U7</accession>
<accession>Q9BU34</accession>
<accession>Q9H0U1</accession>
<comment type="function">
    <text evidence="2 4 5 6 7">Part of TspanC8 subgroup, composed of 6 members that interact with the transmembrane metalloprotease ADAM10. This interaction is required for ADAM10 exit from the endoplasmic reticulum and for enzymatic maturation and trafficking to the cell surface as well as substrate specificity. Different TspanC8/ADAM10 complexes have distinct substrates (PubMed:23035126, PubMed:26668317, PubMed:26686862, PubMed:37516108). Negatively regulates ADAM10-mediated cleavage of GP6 (By similarity). Promotes ADAM10-mediated cleavage of CDH5 (By similarity).</text>
</comment>
<comment type="subunit">
    <text evidence="4 5 6">Interacts with ADAM10; the interaction promotes ADAM10 maturation and cell surface expression.</text>
</comment>
<comment type="interaction">
    <interactant intactId="EBI-6308913">
        <id>Q8NG11</id>
    </interactant>
    <interactant intactId="EBI-1536151">
        <id>O14672</id>
        <label>ADAM10</label>
    </interactant>
    <organismsDiffer>false</organismsDiffer>
    <experiments>9</experiments>
</comment>
<comment type="subcellular location">
    <subcellularLocation>
        <location evidence="6">Cell membrane</location>
        <topology evidence="10">Multi-pass membrane protein</topology>
    </subcellularLocation>
</comment>
<comment type="alternative products">
    <event type="alternative splicing"/>
    <isoform>
        <id>Q8NG11-1</id>
        <name>1</name>
        <sequence type="displayed"/>
    </isoform>
    <isoform>
        <id>Q8NG11-2</id>
        <name>2</name>
        <sequence type="described" ref="VSP_011878"/>
    </isoform>
    <isoform>
        <id>Q8NG11-3</id>
        <name>3</name>
        <sequence type="described" ref="VSP_043194"/>
    </isoform>
</comment>
<comment type="similarity">
    <text evidence="10">Belongs to the tetraspanin (TM4SF) family.</text>
</comment>
<keyword id="KW-0025">Alternative splicing</keyword>
<keyword id="KW-1003">Cell membrane</keyword>
<keyword id="KW-1015">Disulfide bond</keyword>
<keyword id="KW-0325">Glycoprotein</keyword>
<keyword id="KW-0472">Membrane</keyword>
<keyword id="KW-1267">Proteomics identification</keyword>
<keyword id="KW-1185">Reference proteome</keyword>
<keyword id="KW-0812">Transmembrane</keyword>
<keyword id="KW-1133">Transmembrane helix</keyword>
<sequence>MHYYRYSNAKVSCWYKYLLFSYNIIFWLAGVVFLGVGLWAWSEKGVLSDLTKVTRMHGIDPVVLVLMVGVVMFTLGFAGCVGALRENICLLNFFCGTIVLIFFLELAVAVLAFLFQDWVRDRFREFFESNIKSYRDDIDLQNLIDSLQKANQCCGAYGPEDWDLNVYFNCSGASYSREKCGVPFSCCVPDPAQKVVNTQCGYDVRIQLKSKWDESIFTKGCIQALESWLPRNIYIVAGVFIAISLLQIFGIFLARTLISDIEAVKAGHHF</sequence>
<protein>
    <recommendedName>
        <fullName>Tetraspanin-14</fullName>
        <shortName>Tspan-14</shortName>
    </recommendedName>
    <alternativeName>
        <fullName>DC-TM4F2</fullName>
    </alternativeName>
    <alternativeName>
        <fullName>Transmembrane 4 superfamily member 14</fullName>
    </alternativeName>
</protein>